<feature type="chain" id="PRO_1000165900" description="Large ribosomal subunit protein uL3">
    <location>
        <begin position="1"/>
        <end position="218"/>
    </location>
</feature>
<organism>
    <name type="scientific">Rhodococcus opacus (strain B4)</name>
    <dbReference type="NCBI Taxonomy" id="632772"/>
    <lineage>
        <taxon>Bacteria</taxon>
        <taxon>Bacillati</taxon>
        <taxon>Actinomycetota</taxon>
        <taxon>Actinomycetes</taxon>
        <taxon>Mycobacteriales</taxon>
        <taxon>Nocardiaceae</taxon>
        <taxon>Rhodococcus</taxon>
    </lineage>
</organism>
<keyword id="KW-0687">Ribonucleoprotein</keyword>
<keyword id="KW-0689">Ribosomal protein</keyword>
<keyword id="KW-0694">RNA-binding</keyword>
<keyword id="KW-0699">rRNA-binding</keyword>
<accession>C1B012</accession>
<evidence type="ECO:0000255" key="1">
    <source>
        <dbReference type="HAMAP-Rule" id="MF_01325"/>
    </source>
</evidence>
<evidence type="ECO:0000305" key="2"/>
<gene>
    <name evidence="1" type="primary">rplC</name>
    <name type="ordered locus">ROP_61860</name>
</gene>
<comment type="function">
    <text evidence="1">One of the primary rRNA binding proteins, it binds directly near the 3'-end of the 23S rRNA, where it nucleates assembly of the 50S subunit.</text>
</comment>
<comment type="subunit">
    <text evidence="1">Part of the 50S ribosomal subunit. Forms a cluster with proteins L14 and L19.</text>
</comment>
<comment type="similarity">
    <text evidence="1">Belongs to the universal ribosomal protein uL3 family.</text>
</comment>
<dbReference type="EMBL" id="AP011115">
    <property type="protein sequence ID" value="BAH54433.1"/>
    <property type="molecule type" value="Genomic_DNA"/>
</dbReference>
<dbReference type="RefSeq" id="WP_009479366.1">
    <property type="nucleotide sequence ID" value="NC_012522.1"/>
</dbReference>
<dbReference type="SMR" id="C1B012"/>
<dbReference type="STRING" id="632772.ROP_61860"/>
<dbReference type="KEGG" id="rop:ROP_61860"/>
<dbReference type="PATRIC" id="fig|632772.20.peg.6462"/>
<dbReference type="HOGENOM" id="CLU_044142_4_1_11"/>
<dbReference type="OrthoDB" id="9806135at2"/>
<dbReference type="Proteomes" id="UP000002212">
    <property type="component" value="Chromosome"/>
</dbReference>
<dbReference type="GO" id="GO:0022625">
    <property type="term" value="C:cytosolic large ribosomal subunit"/>
    <property type="evidence" value="ECO:0007669"/>
    <property type="project" value="TreeGrafter"/>
</dbReference>
<dbReference type="GO" id="GO:0019843">
    <property type="term" value="F:rRNA binding"/>
    <property type="evidence" value="ECO:0007669"/>
    <property type="project" value="UniProtKB-UniRule"/>
</dbReference>
<dbReference type="GO" id="GO:0003735">
    <property type="term" value="F:structural constituent of ribosome"/>
    <property type="evidence" value="ECO:0007669"/>
    <property type="project" value="InterPro"/>
</dbReference>
<dbReference type="GO" id="GO:0006412">
    <property type="term" value="P:translation"/>
    <property type="evidence" value="ECO:0007669"/>
    <property type="project" value="UniProtKB-UniRule"/>
</dbReference>
<dbReference type="FunFam" id="2.40.30.10:FF:000004">
    <property type="entry name" value="50S ribosomal protein L3"/>
    <property type="match status" value="1"/>
</dbReference>
<dbReference type="FunFam" id="3.30.160.810:FF:000003">
    <property type="entry name" value="50S ribosomal protein L3"/>
    <property type="match status" value="1"/>
</dbReference>
<dbReference type="Gene3D" id="3.30.160.810">
    <property type="match status" value="1"/>
</dbReference>
<dbReference type="Gene3D" id="2.40.30.10">
    <property type="entry name" value="Translation factors"/>
    <property type="match status" value="1"/>
</dbReference>
<dbReference type="HAMAP" id="MF_01325_B">
    <property type="entry name" value="Ribosomal_uL3_B"/>
    <property type="match status" value="1"/>
</dbReference>
<dbReference type="InterPro" id="IPR000597">
    <property type="entry name" value="Ribosomal_uL3"/>
</dbReference>
<dbReference type="InterPro" id="IPR019927">
    <property type="entry name" value="Ribosomal_uL3_bac/org-type"/>
</dbReference>
<dbReference type="InterPro" id="IPR019926">
    <property type="entry name" value="Ribosomal_uL3_CS"/>
</dbReference>
<dbReference type="InterPro" id="IPR009000">
    <property type="entry name" value="Transl_B-barrel_sf"/>
</dbReference>
<dbReference type="NCBIfam" id="TIGR03625">
    <property type="entry name" value="L3_bact"/>
    <property type="match status" value="1"/>
</dbReference>
<dbReference type="PANTHER" id="PTHR11229">
    <property type="entry name" value="50S RIBOSOMAL PROTEIN L3"/>
    <property type="match status" value="1"/>
</dbReference>
<dbReference type="PANTHER" id="PTHR11229:SF16">
    <property type="entry name" value="LARGE RIBOSOMAL SUBUNIT PROTEIN UL3C"/>
    <property type="match status" value="1"/>
</dbReference>
<dbReference type="Pfam" id="PF00297">
    <property type="entry name" value="Ribosomal_L3"/>
    <property type="match status" value="1"/>
</dbReference>
<dbReference type="SUPFAM" id="SSF50447">
    <property type="entry name" value="Translation proteins"/>
    <property type="match status" value="1"/>
</dbReference>
<dbReference type="PROSITE" id="PS00474">
    <property type="entry name" value="RIBOSOMAL_L3"/>
    <property type="match status" value="1"/>
</dbReference>
<protein>
    <recommendedName>
        <fullName evidence="1">Large ribosomal subunit protein uL3</fullName>
    </recommendedName>
    <alternativeName>
        <fullName evidence="2">50S ribosomal protein L3</fullName>
    </alternativeName>
</protein>
<name>RL3_RHOOB</name>
<reference key="1">
    <citation type="submission" date="2009-03" db="EMBL/GenBank/DDBJ databases">
        <title>Comparison of the complete genome sequences of Rhodococcus erythropolis PR4 and Rhodococcus opacus B4.</title>
        <authorList>
            <person name="Takarada H."/>
            <person name="Sekine M."/>
            <person name="Hosoyama A."/>
            <person name="Yamada R."/>
            <person name="Fujisawa T."/>
            <person name="Omata S."/>
            <person name="Shimizu A."/>
            <person name="Tsukatani N."/>
            <person name="Tanikawa S."/>
            <person name="Fujita N."/>
            <person name="Harayama S."/>
        </authorList>
    </citation>
    <scope>NUCLEOTIDE SEQUENCE [LARGE SCALE GENOMIC DNA]</scope>
    <source>
        <strain>B4</strain>
    </source>
</reference>
<proteinExistence type="inferred from homology"/>
<sequence length="218" mass="22942">MTDTKIKGILGTKLGMTQVFDENNRVVPVTVVKAGPNVVTQIRTEERDGYSAVQLAFGAIDPRKVNKPTSGQFAKAGVTPRRHVVELRVADTSEYEVGQELTAEVFEDGAYVDVTGTSKGKGFAGTMKRHGFAGQGASHGAQAVHRRPGSIGGCATPGRVFKGMRMSGRMGSDRITTQNLSVHKVDAENGLLLIKGAIPGRKGGLVIVKSAVKGGARA</sequence>